<keyword id="KW-0066">ATP synthesis</keyword>
<keyword id="KW-0997">Cell inner membrane</keyword>
<keyword id="KW-1003">Cell membrane</keyword>
<keyword id="KW-0139">CF(1)</keyword>
<keyword id="KW-0375">Hydrogen ion transport</keyword>
<keyword id="KW-0406">Ion transport</keyword>
<keyword id="KW-0472">Membrane</keyword>
<keyword id="KW-0813">Transport</keyword>
<organism>
    <name type="scientific">Escherichia fergusonii (strain ATCC 35469 / DSM 13698 / CCUG 18766 / IAM 14443 / JCM 21226 / LMG 7866 / NBRC 102419 / NCTC 12128 / CDC 0568-73)</name>
    <dbReference type="NCBI Taxonomy" id="585054"/>
    <lineage>
        <taxon>Bacteria</taxon>
        <taxon>Pseudomonadati</taxon>
        <taxon>Pseudomonadota</taxon>
        <taxon>Gammaproteobacteria</taxon>
        <taxon>Enterobacterales</taxon>
        <taxon>Enterobacteriaceae</taxon>
        <taxon>Escherichia</taxon>
    </lineage>
</organism>
<accession>B7LK76</accession>
<name>ATPE_ESCF3</name>
<gene>
    <name evidence="1" type="primary">atpC</name>
    <name type="ordered locus">EFER_4030</name>
</gene>
<feature type="chain" id="PRO_1000127858" description="ATP synthase epsilon chain">
    <location>
        <begin position="1"/>
        <end position="139"/>
    </location>
</feature>
<protein>
    <recommendedName>
        <fullName evidence="1">ATP synthase epsilon chain</fullName>
    </recommendedName>
    <alternativeName>
        <fullName evidence="1">ATP synthase F1 sector epsilon subunit</fullName>
    </alternativeName>
    <alternativeName>
        <fullName evidence="1">F-ATPase epsilon subunit</fullName>
    </alternativeName>
</protein>
<dbReference type="EMBL" id="CU928158">
    <property type="protein sequence ID" value="CAQ91464.1"/>
    <property type="molecule type" value="Genomic_DNA"/>
</dbReference>
<dbReference type="RefSeq" id="WP_001251965.1">
    <property type="nucleotide sequence ID" value="NC_011740.1"/>
</dbReference>
<dbReference type="SMR" id="B7LK76"/>
<dbReference type="KEGG" id="efe:EFER_4030"/>
<dbReference type="HOGENOM" id="CLU_084338_2_0_6"/>
<dbReference type="OrthoDB" id="9791445at2"/>
<dbReference type="Proteomes" id="UP000000745">
    <property type="component" value="Chromosome"/>
</dbReference>
<dbReference type="GO" id="GO:0005886">
    <property type="term" value="C:plasma membrane"/>
    <property type="evidence" value="ECO:0007669"/>
    <property type="project" value="UniProtKB-SubCell"/>
</dbReference>
<dbReference type="GO" id="GO:0045259">
    <property type="term" value="C:proton-transporting ATP synthase complex"/>
    <property type="evidence" value="ECO:0007669"/>
    <property type="project" value="UniProtKB-KW"/>
</dbReference>
<dbReference type="GO" id="GO:0005524">
    <property type="term" value="F:ATP binding"/>
    <property type="evidence" value="ECO:0007669"/>
    <property type="project" value="UniProtKB-UniRule"/>
</dbReference>
<dbReference type="GO" id="GO:0046933">
    <property type="term" value="F:proton-transporting ATP synthase activity, rotational mechanism"/>
    <property type="evidence" value="ECO:0007669"/>
    <property type="project" value="UniProtKB-UniRule"/>
</dbReference>
<dbReference type="CDD" id="cd12152">
    <property type="entry name" value="F1-ATPase_delta"/>
    <property type="match status" value="1"/>
</dbReference>
<dbReference type="FunFam" id="1.20.5.440:FF:000001">
    <property type="entry name" value="ATP synthase epsilon chain"/>
    <property type="match status" value="1"/>
</dbReference>
<dbReference type="FunFam" id="2.60.15.10:FF:000001">
    <property type="entry name" value="ATP synthase epsilon chain"/>
    <property type="match status" value="1"/>
</dbReference>
<dbReference type="Gene3D" id="1.20.5.440">
    <property type="entry name" value="ATP synthase delta/epsilon subunit, C-terminal domain"/>
    <property type="match status" value="1"/>
</dbReference>
<dbReference type="Gene3D" id="2.60.15.10">
    <property type="entry name" value="F0F1 ATP synthase delta/epsilon subunit, N-terminal"/>
    <property type="match status" value="1"/>
</dbReference>
<dbReference type="HAMAP" id="MF_00530">
    <property type="entry name" value="ATP_synth_epsil_bac"/>
    <property type="match status" value="1"/>
</dbReference>
<dbReference type="InterPro" id="IPR036794">
    <property type="entry name" value="ATP_F1_dsu/esu_C_sf"/>
</dbReference>
<dbReference type="InterPro" id="IPR001469">
    <property type="entry name" value="ATP_synth_F1_dsu/esu"/>
</dbReference>
<dbReference type="InterPro" id="IPR020546">
    <property type="entry name" value="ATP_synth_F1_dsu/esu_N"/>
</dbReference>
<dbReference type="InterPro" id="IPR020547">
    <property type="entry name" value="ATP_synth_F1_esu_C"/>
</dbReference>
<dbReference type="InterPro" id="IPR036771">
    <property type="entry name" value="ATPsynth_dsu/esu_N"/>
</dbReference>
<dbReference type="NCBIfam" id="TIGR01216">
    <property type="entry name" value="ATP_synt_epsi"/>
    <property type="match status" value="1"/>
</dbReference>
<dbReference type="NCBIfam" id="NF001847">
    <property type="entry name" value="PRK00571.1-4"/>
    <property type="match status" value="1"/>
</dbReference>
<dbReference type="PANTHER" id="PTHR13822">
    <property type="entry name" value="ATP SYNTHASE DELTA/EPSILON CHAIN"/>
    <property type="match status" value="1"/>
</dbReference>
<dbReference type="PANTHER" id="PTHR13822:SF10">
    <property type="entry name" value="ATP SYNTHASE EPSILON CHAIN, CHLOROPLASTIC"/>
    <property type="match status" value="1"/>
</dbReference>
<dbReference type="Pfam" id="PF00401">
    <property type="entry name" value="ATP-synt_DE"/>
    <property type="match status" value="1"/>
</dbReference>
<dbReference type="Pfam" id="PF02823">
    <property type="entry name" value="ATP-synt_DE_N"/>
    <property type="match status" value="1"/>
</dbReference>
<dbReference type="SUPFAM" id="SSF46604">
    <property type="entry name" value="Epsilon subunit of F1F0-ATP synthase C-terminal domain"/>
    <property type="match status" value="1"/>
</dbReference>
<dbReference type="SUPFAM" id="SSF51344">
    <property type="entry name" value="Epsilon subunit of F1F0-ATP synthase N-terminal domain"/>
    <property type="match status" value="1"/>
</dbReference>
<reference key="1">
    <citation type="journal article" date="2009" name="PLoS Genet.">
        <title>Organised genome dynamics in the Escherichia coli species results in highly diverse adaptive paths.</title>
        <authorList>
            <person name="Touchon M."/>
            <person name="Hoede C."/>
            <person name="Tenaillon O."/>
            <person name="Barbe V."/>
            <person name="Baeriswyl S."/>
            <person name="Bidet P."/>
            <person name="Bingen E."/>
            <person name="Bonacorsi S."/>
            <person name="Bouchier C."/>
            <person name="Bouvet O."/>
            <person name="Calteau A."/>
            <person name="Chiapello H."/>
            <person name="Clermont O."/>
            <person name="Cruveiller S."/>
            <person name="Danchin A."/>
            <person name="Diard M."/>
            <person name="Dossat C."/>
            <person name="Karoui M.E."/>
            <person name="Frapy E."/>
            <person name="Garry L."/>
            <person name="Ghigo J.M."/>
            <person name="Gilles A.M."/>
            <person name="Johnson J."/>
            <person name="Le Bouguenec C."/>
            <person name="Lescat M."/>
            <person name="Mangenot S."/>
            <person name="Martinez-Jehanne V."/>
            <person name="Matic I."/>
            <person name="Nassif X."/>
            <person name="Oztas S."/>
            <person name="Petit M.A."/>
            <person name="Pichon C."/>
            <person name="Rouy Z."/>
            <person name="Ruf C.S."/>
            <person name="Schneider D."/>
            <person name="Tourret J."/>
            <person name="Vacherie B."/>
            <person name="Vallenet D."/>
            <person name="Medigue C."/>
            <person name="Rocha E.P.C."/>
            <person name="Denamur E."/>
        </authorList>
    </citation>
    <scope>NUCLEOTIDE SEQUENCE [LARGE SCALE GENOMIC DNA]</scope>
    <source>
        <strain>ATCC 35469 / DSM 13698 / BCRC 15582 / CCUG 18766 / IAM 14443 / JCM 21226 / LMG 7866 / NBRC 102419 / NCTC 12128 / CDC 0568-73</strain>
    </source>
</reference>
<proteinExistence type="inferred from homology"/>
<comment type="function">
    <text evidence="1">Produces ATP from ADP in the presence of a proton gradient across the membrane.</text>
</comment>
<comment type="subunit">
    <text evidence="1">F-type ATPases have 2 components, CF(1) - the catalytic core - and CF(0) - the membrane proton channel. CF(1) has five subunits: alpha(3), beta(3), gamma(1), delta(1), epsilon(1). CF(0) has three main subunits: a, b and c.</text>
</comment>
<comment type="subcellular location">
    <subcellularLocation>
        <location evidence="1">Cell inner membrane</location>
        <topology evidence="1">Peripheral membrane protein</topology>
    </subcellularLocation>
</comment>
<comment type="similarity">
    <text evidence="1">Belongs to the ATPase epsilon chain family.</text>
</comment>
<evidence type="ECO:0000255" key="1">
    <source>
        <dbReference type="HAMAP-Rule" id="MF_00530"/>
    </source>
</evidence>
<sequence length="139" mass="15068">MAMTYHLDVVSAEQQMFSGLVEKIQVTGSEGELGIYPGHAPLLTAIKPGMIRIVKQHGHEEFIYLSGGILEVQPGNVTVLADTAIRGQDLDEARAMEAKRKAEEHISSSHGDVDYAQASAELAKAIAQLRVIELTKKAM</sequence>